<name>ATC_PLAFK</name>
<accession>Q08853</accession>
<proteinExistence type="inferred from homology"/>
<organism>
    <name type="scientific">Plasmodium falciparum (isolate K1 / Thailand)</name>
    <dbReference type="NCBI Taxonomy" id="5839"/>
    <lineage>
        <taxon>Eukaryota</taxon>
        <taxon>Sar</taxon>
        <taxon>Alveolata</taxon>
        <taxon>Apicomplexa</taxon>
        <taxon>Aconoidasida</taxon>
        <taxon>Haemosporida</taxon>
        <taxon>Plasmodiidae</taxon>
        <taxon>Plasmodium</taxon>
        <taxon>Plasmodium (Laverania)</taxon>
    </lineage>
</organism>
<evidence type="ECO:0000250" key="1"/>
<evidence type="ECO:0000255" key="2"/>
<evidence type="ECO:0000256" key="3">
    <source>
        <dbReference type="SAM" id="MobiDB-lite"/>
    </source>
</evidence>
<evidence type="ECO:0000305" key="4"/>
<feature type="chain" id="PRO_0000046227" description="Calcium-transporting ATPase">
    <location>
        <begin position="1"/>
        <end position="1228"/>
    </location>
</feature>
<feature type="topological domain" description="Cytoplasmic" evidence="2">
    <location>
        <begin position="1"/>
        <end position="63"/>
    </location>
</feature>
<feature type="transmembrane region" description="Helical" evidence="2">
    <location>
        <begin position="64"/>
        <end position="81"/>
    </location>
</feature>
<feature type="topological domain" description="Extracellular" evidence="2">
    <location>
        <begin position="82"/>
        <end position="92"/>
    </location>
</feature>
<feature type="transmembrane region" description="Helical" evidence="2">
    <location>
        <begin position="93"/>
        <end position="112"/>
    </location>
</feature>
<feature type="topological domain" description="Cytoplasmic" evidence="2">
    <location>
        <begin position="113"/>
        <end position="270"/>
    </location>
</feature>
<feature type="transmembrane region" description="Helical" evidence="2">
    <location>
        <begin position="271"/>
        <end position="291"/>
    </location>
</feature>
<feature type="topological domain" description="Extracellular" evidence="2">
    <location>
        <begin position="292"/>
        <end position="300"/>
    </location>
</feature>
<feature type="transmembrane region" description="Helical" evidence="2">
    <location>
        <begin position="301"/>
        <end position="321"/>
    </location>
</feature>
<feature type="topological domain" description="Cytoplasmic" evidence="2">
    <location>
        <begin position="322"/>
        <end position="974"/>
    </location>
</feature>
<feature type="transmembrane region" description="Helical" evidence="2">
    <location>
        <begin position="975"/>
        <end position="994"/>
    </location>
</feature>
<feature type="topological domain" description="Extracellular" evidence="2">
    <location>
        <begin position="995"/>
        <end position="1000"/>
    </location>
</feature>
<feature type="transmembrane region" description="Helical" evidence="2">
    <location>
        <begin position="1001"/>
        <end position="1021"/>
    </location>
</feature>
<feature type="topological domain" description="Cytoplasmic" evidence="2">
    <location>
        <begin position="1022"/>
        <end position="1042"/>
    </location>
</feature>
<feature type="transmembrane region" description="Helical" evidence="2">
    <location>
        <begin position="1043"/>
        <end position="1067"/>
    </location>
</feature>
<feature type="topological domain" description="Extracellular" evidence="2">
    <location>
        <begin position="1068"/>
        <end position="1118"/>
    </location>
</feature>
<feature type="transmembrane region" description="Helical" evidence="2">
    <location>
        <begin position="1119"/>
        <end position="1140"/>
    </location>
</feature>
<feature type="topological domain" description="Cytoplasmic" evidence="2">
    <location>
        <begin position="1141"/>
        <end position="1151"/>
    </location>
</feature>
<feature type="transmembrane region" description="Helical" evidence="2">
    <location>
        <begin position="1152"/>
        <end position="1172"/>
    </location>
</feature>
<feature type="topological domain" description="Extracellular" evidence="2">
    <location>
        <begin position="1173"/>
        <end position="1185"/>
    </location>
</feature>
<feature type="transmembrane region" description="Helical" evidence="2">
    <location>
        <begin position="1186"/>
        <end position="1206"/>
    </location>
</feature>
<feature type="topological domain" description="Cytoplasmic" evidence="2">
    <location>
        <begin position="1207"/>
        <end position="1228"/>
    </location>
</feature>
<feature type="region of interest" description="Disordered" evidence="3">
    <location>
        <begin position="452"/>
        <end position="478"/>
    </location>
</feature>
<feature type="region of interest" description="Disordered" evidence="3">
    <location>
        <begin position="562"/>
        <end position="613"/>
    </location>
</feature>
<feature type="compositionally biased region" description="Polar residues" evidence="3">
    <location>
        <begin position="589"/>
        <end position="604"/>
    </location>
</feature>
<feature type="active site" description="4-aspartylphosphate intermediate">
    <location>
        <position position="358"/>
    </location>
</feature>
<feature type="binding site" evidence="1">
    <location>
        <position position="716"/>
    </location>
    <ligand>
        <name>ATP</name>
        <dbReference type="ChEBI" id="CHEBI:30616"/>
    </ligand>
</feature>
<sequence length="1228" mass="139415">MEEVIKNAHTYDVEDVLKFLDVNKDNGLKNEELDDRRLKYGLNELEVEKKKSIFELILNQFDDLLVKILLLAAFISFVLTLLDMKHKKIEICDFIEPLVIVLILILNAAVGVWQECNAEKSLEALKELQPTKAKVLRDGKWEIIDSKYLYVGDIIELSVGNKTPADARIIKIYSTSLKVEQSMLTGESCSVDKYAEKMEDSYKNCEIQLKKNILFSSTAIVCGRCIAVVINIGMKTEIGHIQHAVIESNSEDTQTPLQIKIDLFGQQLSKIIFVICVTVWIINFKHFSDPIHGSFLYGCLYYFKISVALAVAAIPEGLPAVITTCLALGTRRMVKKNAIVRKLQSVETLGCTTVICSDKTGTLTTNQMTTTVFHLFRESDSLTEYQLCQKGDTYYFYESSNLTNDIYAGESSFFNKLKDEGNVEALTDDGEEGSIDEADPYSDYFSSDSKKMKNDLNNNNNNNNNSSRSGAKRNIPLKEMKSNENTIISRGSKILEDKINKYCYSEYDYNFYMCLVNCNEANIFCNDNSQIVKKFGDSTELALLHFVHNFDILPTFSKNNKMPAEYEKNTTPVQSSNKKDKSPRGINKFFSSKNDNSHITSTLNENDKNLKNANHSNYTTAQATTNGYEAIGENTFEHGTSFENCFHSKLGNKINTTSTHNNNNNNNNNSNSVPSECISSWRNECKQIKIIEFTRERKLMSVIVENKKKEIILYCKGAPENIIKNCKYYLTKNDIRPLNETLKNEIHNKIQNMGKRALRTLSFAYKKLSSKDLNIKNTDDYYKLEQDLIYLGGLGIIDPPRKYVGRAIRLCHMAGIRVFMITGDNINTARAIAKEINILNKNEGDDEKDNYTNNKNTQICCYNGREFEDFSLEKQKHILKNTPRIVFCRTEPKHKKQIVKVLKDLGETVAMTGDGVNDAPALKSADIGIAMGINGTEVAKEASDIVLADDNFNTIVEAIKEGRCIYNNMKAFIRYLISSNIGEVASIFITALLGIPDSLAPVQLLWVNLVTDGLPATALGFNPPEHDVMKCKPRHKNDNLINGLTLLRYIIIGTYVGIATVSIFVYWFLFYPDSDMHTLINFYQLSHYNQCKAWNNFRVNKVYDMSEDHCSYFSAGKIKASTLSLSVLVLIEMFNALNALSEYNSLFEIPPWRNMYLVLATIGSLLLHVLILYIPPLARIFGVVPLSAYDWFLVFLWSFPVIILDEIIKFYAKRKLKEEQRTKKIKID</sequence>
<dbReference type="EC" id="7.2.2.10"/>
<dbReference type="EMBL" id="X71765">
    <property type="protein sequence ID" value="CAA50664.1"/>
    <property type="molecule type" value="Genomic_DNA"/>
</dbReference>
<dbReference type="PIR" id="S37621">
    <property type="entry name" value="S37621"/>
</dbReference>
<dbReference type="SMR" id="Q08853"/>
<dbReference type="DrugBank" id="DB11638">
    <property type="generic name" value="Artenimol"/>
</dbReference>
<dbReference type="TCDB" id="3.A.3.2.31">
    <property type="family name" value="the p-type atpase (p-atpase) superfamily"/>
</dbReference>
<dbReference type="BRENDA" id="7.2.2.10">
    <property type="organism ID" value="4889"/>
</dbReference>
<dbReference type="GO" id="GO:0016020">
    <property type="term" value="C:membrane"/>
    <property type="evidence" value="ECO:0007669"/>
    <property type="project" value="UniProtKB-SubCell"/>
</dbReference>
<dbReference type="GO" id="GO:0005524">
    <property type="term" value="F:ATP binding"/>
    <property type="evidence" value="ECO:0007669"/>
    <property type="project" value="UniProtKB-KW"/>
</dbReference>
<dbReference type="GO" id="GO:0016887">
    <property type="term" value="F:ATP hydrolysis activity"/>
    <property type="evidence" value="ECO:0007669"/>
    <property type="project" value="InterPro"/>
</dbReference>
<dbReference type="GO" id="GO:0005388">
    <property type="term" value="F:P-type calcium transporter activity"/>
    <property type="evidence" value="ECO:0007669"/>
    <property type="project" value="UniProtKB-EC"/>
</dbReference>
<dbReference type="FunFam" id="1.20.1110.10:FF:000027">
    <property type="entry name" value="Calcium-transporting ATPase, putative"/>
    <property type="match status" value="1"/>
</dbReference>
<dbReference type="FunFam" id="1.20.1110.10:FF:000037">
    <property type="entry name" value="Calcium-transporting ATPase, putative"/>
    <property type="match status" value="1"/>
</dbReference>
<dbReference type="FunFam" id="2.70.150.10:FF:000014">
    <property type="entry name" value="Calcium-transporting ATPase, putative"/>
    <property type="match status" value="1"/>
</dbReference>
<dbReference type="FunFam" id="3.40.50.1000:FF:000083">
    <property type="entry name" value="Sodium/potassium-transporting ATPase subunit alpha"/>
    <property type="match status" value="1"/>
</dbReference>
<dbReference type="Gene3D" id="3.40.1110.10">
    <property type="entry name" value="Calcium-transporting ATPase, cytoplasmic domain N"/>
    <property type="match status" value="3"/>
</dbReference>
<dbReference type="Gene3D" id="2.70.150.10">
    <property type="entry name" value="Calcium-transporting ATPase, cytoplasmic transduction domain A"/>
    <property type="match status" value="1"/>
</dbReference>
<dbReference type="Gene3D" id="1.20.1110.10">
    <property type="entry name" value="Calcium-transporting ATPase, transmembrane domain"/>
    <property type="match status" value="2"/>
</dbReference>
<dbReference type="Gene3D" id="3.40.50.1000">
    <property type="entry name" value="HAD superfamily/HAD-like"/>
    <property type="match status" value="2"/>
</dbReference>
<dbReference type="InterPro" id="IPR006068">
    <property type="entry name" value="ATPase_P-typ_cation-transptr_C"/>
</dbReference>
<dbReference type="InterPro" id="IPR004014">
    <property type="entry name" value="ATPase_P-typ_cation-transptr_N"/>
</dbReference>
<dbReference type="InterPro" id="IPR023299">
    <property type="entry name" value="ATPase_P-typ_cyto_dom_N"/>
</dbReference>
<dbReference type="InterPro" id="IPR018303">
    <property type="entry name" value="ATPase_P-typ_P_site"/>
</dbReference>
<dbReference type="InterPro" id="IPR023298">
    <property type="entry name" value="ATPase_P-typ_TM_dom_sf"/>
</dbReference>
<dbReference type="InterPro" id="IPR008250">
    <property type="entry name" value="ATPase_P-typ_transduc_dom_A_sf"/>
</dbReference>
<dbReference type="InterPro" id="IPR036412">
    <property type="entry name" value="HAD-like_sf"/>
</dbReference>
<dbReference type="InterPro" id="IPR023214">
    <property type="entry name" value="HAD_sf"/>
</dbReference>
<dbReference type="InterPro" id="IPR001757">
    <property type="entry name" value="P_typ_ATPase"/>
</dbReference>
<dbReference type="InterPro" id="IPR044492">
    <property type="entry name" value="P_typ_ATPase_HD_dom"/>
</dbReference>
<dbReference type="NCBIfam" id="TIGR01494">
    <property type="entry name" value="ATPase_P-type"/>
    <property type="match status" value="3"/>
</dbReference>
<dbReference type="PANTHER" id="PTHR42861">
    <property type="entry name" value="CALCIUM-TRANSPORTING ATPASE"/>
    <property type="match status" value="1"/>
</dbReference>
<dbReference type="Pfam" id="PF13246">
    <property type="entry name" value="Cation_ATPase"/>
    <property type="match status" value="1"/>
</dbReference>
<dbReference type="Pfam" id="PF00689">
    <property type="entry name" value="Cation_ATPase_C"/>
    <property type="match status" value="1"/>
</dbReference>
<dbReference type="Pfam" id="PF00690">
    <property type="entry name" value="Cation_ATPase_N"/>
    <property type="match status" value="1"/>
</dbReference>
<dbReference type="Pfam" id="PF00122">
    <property type="entry name" value="E1-E2_ATPase"/>
    <property type="match status" value="1"/>
</dbReference>
<dbReference type="Pfam" id="PF00702">
    <property type="entry name" value="Hydrolase"/>
    <property type="match status" value="1"/>
</dbReference>
<dbReference type="PRINTS" id="PR00119">
    <property type="entry name" value="CATATPASE"/>
</dbReference>
<dbReference type="SFLD" id="SFLDG00002">
    <property type="entry name" value="C1.7:_P-type_atpase_like"/>
    <property type="match status" value="1"/>
</dbReference>
<dbReference type="SFLD" id="SFLDF00027">
    <property type="entry name" value="p-type_atpase"/>
    <property type="match status" value="1"/>
</dbReference>
<dbReference type="SMART" id="SM00831">
    <property type="entry name" value="Cation_ATPase_N"/>
    <property type="match status" value="1"/>
</dbReference>
<dbReference type="SUPFAM" id="SSF81653">
    <property type="entry name" value="Calcium ATPase, transduction domain A"/>
    <property type="match status" value="1"/>
</dbReference>
<dbReference type="SUPFAM" id="SSF81665">
    <property type="entry name" value="Calcium ATPase, transmembrane domain M"/>
    <property type="match status" value="1"/>
</dbReference>
<dbReference type="SUPFAM" id="SSF56784">
    <property type="entry name" value="HAD-like"/>
    <property type="match status" value="1"/>
</dbReference>
<dbReference type="SUPFAM" id="SSF81660">
    <property type="entry name" value="Metal cation-transporting ATPase, ATP-binding domain N"/>
    <property type="match status" value="1"/>
</dbReference>
<dbReference type="PROSITE" id="PS00154">
    <property type="entry name" value="ATPASE_E1_E2"/>
    <property type="match status" value="1"/>
</dbReference>
<comment type="function">
    <text>This magnesium-dependent enzyme catalyzes the hydrolysis of ATP coupled with the transport of the calcium.</text>
</comment>
<comment type="catalytic activity">
    <reaction>
        <text>Ca(2+)(in) + ATP + H2O = Ca(2+)(out) + ADP + phosphate + H(+)</text>
        <dbReference type="Rhea" id="RHEA:18105"/>
        <dbReference type="ChEBI" id="CHEBI:15377"/>
        <dbReference type="ChEBI" id="CHEBI:15378"/>
        <dbReference type="ChEBI" id="CHEBI:29108"/>
        <dbReference type="ChEBI" id="CHEBI:30616"/>
        <dbReference type="ChEBI" id="CHEBI:43474"/>
        <dbReference type="ChEBI" id="CHEBI:456216"/>
        <dbReference type="EC" id="7.2.2.10"/>
    </reaction>
</comment>
<comment type="subcellular location">
    <subcellularLocation>
        <location>Membrane</location>
        <topology>Multi-pass membrane protein</topology>
    </subcellularLocation>
</comment>
<comment type="similarity">
    <text evidence="4">Belongs to the cation transport ATPase (P-type) (TC 3.A.3) family.</text>
</comment>
<protein>
    <recommendedName>
        <fullName>Calcium-transporting ATPase</fullName>
        <ecNumber>7.2.2.10</ecNumber>
    </recommendedName>
    <alternativeName>
        <fullName>Calcium pump</fullName>
    </alternativeName>
</protein>
<keyword id="KW-0067">ATP-binding</keyword>
<keyword id="KW-0106">Calcium</keyword>
<keyword id="KW-0109">Calcium transport</keyword>
<keyword id="KW-0406">Ion transport</keyword>
<keyword id="KW-0460">Magnesium</keyword>
<keyword id="KW-0472">Membrane</keyword>
<keyword id="KW-0547">Nucleotide-binding</keyword>
<keyword id="KW-0597">Phosphoprotein</keyword>
<keyword id="KW-1278">Translocase</keyword>
<keyword id="KW-0812">Transmembrane</keyword>
<keyword id="KW-1133">Transmembrane helix</keyword>
<keyword id="KW-0813">Transport</keyword>
<reference key="1">
    <citation type="journal article" date="1993" name="J. Cell Sci.">
        <title>Cloning of a Ca(2+)-ATPase gene of Plasmodium falciparum and comparison with vertebrate Ca(2+)-ATPases.</title>
        <authorList>
            <person name="Kimura M."/>
            <person name="Yamaguchi Y."/>
            <person name="Takada S."/>
            <person name="Tanabe K."/>
        </authorList>
    </citation>
    <scope>NUCLEOTIDE SEQUENCE [GENOMIC DNA]</scope>
</reference>
<gene>
    <name type="primary">ATP6</name>
</gene>